<evidence type="ECO:0000255" key="1">
    <source>
        <dbReference type="HAMAP-Rule" id="MF_01504"/>
    </source>
</evidence>
<evidence type="ECO:0000256" key="2">
    <source>
        <dbReference type="SAM" id="MobiDB-lite"/>
    </source>
</evidence>
<proteinExistence type="inferred from homology"/>
<sequence length="53" mass="6087">MGRQAEFWSESKNNSKIDGQPKAKARFASKRPNGTINTHPQERMRAANQQEEE</sequence>
<feature type="chain" id="PRO_1000087516" description="Small, acid-soluble spore protein K">
    <location>
        <begin position="1"/>
        <end position="53"/>
    </location>
</feature>
<feature type="region of interest" description="Disordered" evidence="2">
    <location>
        <begin position="1"/>
        <end position="53"/>
    </location>
</feature>
<name>SSPK_BACCN</name>
<organism>
    <name type="scientific">Bacillus cytotoxicus (strain DSM 22905 / CIP 110041 / 391-98 / NVH 391-98)</name>
    <dbReference type="NCBI Taxonomy" id="315749"/>
    <lineage>
        <taxon>Bacteria</taxon>
        <taxon>Bacillati</taxon>
        <taxon>Bacillota</taxon>
        <taxon>Bacilli</taxon>
        <taxon>Bacillales</taxon>
        <taxon>Bacillaceae</taxon>
        <taxon>Bacillus</taxon>
        <taxon>Bacillus cereus group</taxon>
    </lineage>
</organism>
<protein>
    <recommendedName>
        <fullName evidence="1">Small, acid-soluble spore protein K</fullName>
        <shortName evidence="1">SASP K</shortName>
    </recommendedName>
</protein>
<reference key="1">
    <citation type="journal article" date="2008" name="Chem. Biol. Interact.">
        <title>Extending the Bacillus cereus group genomics to putative food-borne pathogens of different toxicity.</title>
        <authorList>
            <person name="Lapidus A."/>
            <person name="Goltsman E."/>
            <person name="Auger S."/>
            <person name="Galleron N."/>
            <person name="Segurens B."/>
            <person name="Dossat C."/>
            <person name="Land M.L."/>
            <person name="Broussolle V."/>
            <person name="Brillard J."/>
            <person name="Guinebretiere M.-H."/>
            <person name="Sanchis V."/>
            <person name="Nguen-the C."/>
            <person name="Lereclus D."/>
            <person name="Richardson P."/>
            <person name="Wincker P."/>
            <person name="Weissenbach J."/>
            <person name="Ehrlich S.D."/>
            <person name="Sorokin A."/>
        </authorList>
    </citation>
    <scope>NUCLEOTIDE SEQUENCE [LARGE SCALE GENOMIC DNA]</scope>
    <source>
        <strain>DSM 22905 / CIP 110041 / 391-98 / NVH 391-98</strain>
    </source>
</reference>
<comment type="subcellular location">
    <subcellularLocation>
        <location evidence="1">Spore core</location>
    </subcellularLocation>
</comment>
<comment type="induction">
    <text evidence="1">Expressed only in the forespore compartment of sporulating cells.</text>
</comment>
<comment type="similarity">
    <text evidence="1">Belongs to the SspK family.</text>
</comment>
<dbReference type="EMBL" id="CP000764">
    <property type="protein sequence ID" value="ABS20795.1"/>
    <property type="molecule type" value="Genomic_DNA"/>
</dbReference>
<dbReference type="RefSeq" id="WP_011983551.1">
    <property type="nucleotide sequence ID" value="NC_009674.1"/>
</dbReference>
<dbReference type="STRING" id="315749.Bcer98_0440"/>
<dbReference type="GeneID" id="33895786"/>
<dbReference type="KEGG" id="bcy:Bcer98_0440"/>
<dbReference type="HOGENOM" id="CLU_3076423_0_0_9"/>
<dbReference type="OrthoDB" id="2382188at2"/>
<dbReference type="Proteomes" id="UP000002300">
    <property type="component" value="Chromosome"/>
</dbReference>
<dbReference type="GO" id="GO:0042601">
    <property type="term" value="C:endospore-forming forespore"/>
    <property type="evidence" value="ECO:0007669"/>
    <property type="project" value="InterPro"/>
</dbReference>
<dbReference type="GO" id="GO:0030436">
    <property type="term" value="P:asexual sporulation"/>
    <property type="evidence" value="ECO:0007669"/>
    <property type="project" value="UniProtKB-UniRule"/>
</dbReference>
<dbReference type="GO" id="GO:0030435">
    <property type="term" value="P:sporulation resulting in formation of a cellular spore"/>
    <property type="evidence" value="ECO:0007669"/>
    <property type="project" value="UniProtKB-KW"/>
</dbReference>
<dbReference type="HAMAP" id="MF_01504">
    <property type="entry name" value="SspK"/>
    <property type="match status" value="1"/>
</dbReference>
<dbReference type="InterPro" id="IPR012611">
    <property type="entry name" value="SASP_SspK"/>
</dbReference>
<dbReference type="NCBIfam" id="NF002843">
    <property type="entry name" value="PRK03081.1"/>
    <property type="match status" value="1"/>
</dbReference>
<dbReference type="NCBIfam" id="TIGR03091">
    <property type="entry name" value="SASP_sspK"/>
    <property type="match status" value="1"/>
</dbReference>
<dbReference type="Pfam" id="PF08176">
    <property type="entry name" value="SspK"/>
    <property type="match status" value="1"/>
</dbReference>
<keyword id="KW-0749">Sporulation</keyword>
<gene>
    <name evidence="1" type="primary">sspK</name>
    <name type="ordered locus">Bcer98_0440</name>
</gene>
<accession>A7GKY7</accession>